<accession>Q1ACI1</accession>
<proteinExistence type="inferred from homology"/>
<geneLocation type="chloroplast"/>
<reference key="1">
    <citation type="journal article" date="2006" name="Mol. Biol. Evol.">
        <title>The chloroplast genome sequence of Chara vulgaris sheds new light into the closest green algal relatives of land plants.</title>
        <authorList>
            <person name="Turmel M."/>
            <person name="Otis C."/>
            <person name="Lemieux C."/>
        </authorList>
    </citation>
    <scope>NUCLEOTIDE SEQUENCE [LARGE SCALE GENOMIC DNA]</scope>
</reference>
<dbReference type="EMBL" id="DQ229107">
    <property type="protein sequence ID" value="ABA61939.1"/>
    <property type="molecule type" value="Genomic_DNA"/>
</dbReference>
<dbReference type="RefSeq" id="YP_635766.1">
    <property type="nucleotide sequence ID" value="NC_008097.1"/>
</dbReference>
<dbReference type="SMR" id="Q1ACI1"/>
<dbReference type="GeneID" id="4100226"/>
<dbReference type="GO" id="GO:0009535">
    <property type="term" value="C:chloroplast thylakoid membrane"/>
    <property type="evidence" value="ECO:0007669"/>
    <property type="project" value="UniProtKB-SubCell"/>
</dbReference>
<dbReference type="GO" id="GO:0009522">
    <property type="term" value="C:photosystem I"/>
    <property type="evidence" value="ECO:0007669"/>
    <property type="project" value="UniProtKB-KW"/>
</dbReference>
<dbReference type="GO" id="GO:0015979">
    <property type="term" value="P:photosynthesis"/>
    <property type="evidence" value="ECO:0007669"/>
    <property type="project" value="UniProtKB-UniRule"/>
</dbReference>
<dbReference type="Gene3D" id="1.20.5.510">
    <property type="entry name" value="Single helix bin"/>
    <property type="match status" value="1"/>
</dbReference>
<dbReference type="HAMAP" id="MF_00522">
    <property type="entry name" value="PSI_PsaJ"/>
    <property type="match status" value="1"/>
</dbReference>
<dbReference type="InterPro" id="IPR002615">
    <property type="entry name" value="PSI_PsaJ"/>
</dbReference>
<dbReference type="InterPro" id="IPR036062">
    <property type="entry name" value="PSI_PsaJ_sf"/>
</dbReference>
<dbReference type="PANTHER" id="PTHR36082">
    <property type="match status" value="1"/>
</dbReference>
<dbReference type="PANTHER" id="PTHR36082:SF2">
    <property type="entry name" value="PHOTOSYSTEM I REACTION CENTER SUBUNIT IX"/>
    <property type="match status" value="1"/>
</dbReference>
<dbReference type="Pfam" id="PF01701">
    <property type="entry name" value="PSI_PsaJ"/>
    <property type="match status" value="1"/>
</dbReference>
<dbReference type="SUPFAM" id="SSF81544">
    <property type="entry name" value="Subunit IX of photosystem I reaction centre, PsaJ"/>
    <property type="match status" value="1"/>
</dbReference>
<sequence>MQDVKTYLSTAPVLATLWFGLLAGILIEINRFFPDALVLPY</sequence>
<organism>
    <name type="scientific">Chara vulgaris</name>
    <name type="common">Common stonewort</name>
    <dbReference type="NCBI Taxonomy" id="55564"/>
    <lineage>
        <taxon>Eukaryota</taxon>
        <taxon>Viridiplantae</taxon>
        <taxon>Streptophyta</taxon>
        <taxon>Charophyceae</taxon>
        <taxon>Charales</taxon>
        <taxon>Characeae</taxon>
        <taxon>Chara</taxon>
    </lineage>
</organism>
<keyword id="KW-0150">Chloroplast</keyword>
<keyword id="KW-0472">Membrane</keyword>
<keyword id="KW-0602">Photosynthesis</keyword>
<keyword id="KW-0603">Photosystem I</keyword>
<keyword id="KW-0934">Plastid</keyword>
<keyword id="KW-0793">Thylakoid</keyword>
<keyword id="KW-0812">Transmembrane</keyword>
<keyword id="KW-1133">Transmembrane helix</keyword>
<gene>
    <name evidence="1" type="primary">psaJ</name>
</gene>
<comment type="function">
    <text evidence="1">May help in the organization of the PsaE and PsaF subunits.</text>
</comment>
<comment type="subcellular location">
    <subcellularLocation>
        <location evidence="1">Plastid</location>
        <location evidence="1">Chloroplast thylakoid membrane</location>
        <topology evidence="1">Single-pass membrane protein</topology>
    </subcellularLocation>
</comment>
<comment type="similarity">
    <text evidence="1">Belongs to the PsaJ family.</text>
</comment>
<evidence type="ECO:0000255" key="1">
    <source>
        <dbReference type="HAMAP-Rule" id="MF_00522"/>
    </source>
</evidence>
<name>PSAJ_CHAVU</name>
<feature type="chain" id="PRO_0000276050" description="Photosystem I reaction center subunit IX">
    <location>
        <begin position="1"/>
        <end position="41"/>
    </location>
</feature>
<feature type="transmembrane region" description="Helical" evidence="1">
    <location>
        <begin position="7"/>
        <end position="27"/>
    </location>
</feature>
<protein>
    <recommendedName>
        <fullName evidence="1">Photosystem I reaction center subunit IX</fullName>
    </recommendedName>
    <alternativeName>
        <fullName evidence="1">PSI-J</fullName>
    </alternativeName>
</protein>